<protein>
    <recommendedName>
        <fullName>Gamma-crystallin D</fullName>
    </recommendedName>
    <alternativeName>
        <fullName evidence="22">Gamma-D-crystallin</fullName>
    </alternativeName>
    <alternativeName>
        <fullName>Gamma-crystallin 4</fullName>
    </alternativeName>
</protein>
<comment type="function">
    <text>Crystallins are the dominant structural components of the vertebrate eye lens.</text>
</comment>
<comment type="subunit">
    <text evidence="3">Monomer.</text>
</comment>
<comment type="interaction">
    <interactant intactId="EBI-7673124">
        <id>P07320</id>
    </interactant>
    <interactant intactId="EBI-7673244">
        <id>P24623</id>
        <label>Cryaa</label>
    </interactant>
    <organismsDiffer>true</organismsDiffer>
    <experiments>2</experiments>
</comment>
<comment type="interaction">
    <interactant intactId="EBI-7673124">
        <id>P07320</id>
    </interactant>
    <interactant intactId="EBI-299046">
        <id>P23927</id>
        <label>Cryab</label>
    </interactant>
    <organismsDiffer>true</organismsDiffer>
    <experiments>2</experiments>
</comment>
<comment type="domain">
    <text>Has a two-domain beta-structure, folded into four very similar Greek key motifs.</text>
</comment>
<comment type="disease" evidence="2 3 4 5 6 7 9 10 11 12 13 14 15 16 17 18 21">
    <disease id="DI-01456">
        <name>Cataract 4, multiple types</name>
        <acronym>CTRCT4</acronym>
        <description>An opacification of the crystalline lens of the eye that frequently results in visual impairment or blindness. Opacities vary in morphology, are often confined to a portion of the lens, and may be static or progressive. CTRCT4 includes crystalline aculeiform, congenital cerulean and non-nuclear polymorphic cataracts, among others. Crystalline aculeiform cataract is characterized by fiberglass-like or needle-like crystals projecting in different directions, through or close to the axial region of the lens. Non-nuclear polymorphic cataract is a partial opacity with variable location between the fetal nucleus of the lens and the equator. The fetal nucleus is normal. The opacities are irregular and look similar to a bunch of grapes and may be present simultaneously in different lens layers. Congenital cerulean cataract is characterized by peripheral bluish and white opacifications organized in concentric layers with occasional central lesions arranged radially. The opacities are observed in the superficial layers of the fetal nucleus as well as the adult nucleus of the lens. Involvement is usually bilateral. Visual acuity is only mildly reduced in childhood. In adulthood, the opacifications may progress, making lens extraction necessary. Histologically the lesions are described as fusiform cavities between lens fibers which contain a deeply staining granular material. Although the lesions may take on various colors, a dull blue is the most common appearance and is responsible for the designation cerulean cataract.</description>
        <dbReference type="MIM" id="115700"/>
    </disease>
    <text>The disease is caused by variants affecting the gene represented in this entry.</text>
</comment>
<comment type="similarity">
    <text evidence="23">Belongs to the beta/gamma-crystallin family.</text>
</comment>
<comment type="online information" name="Eye disease Crystallin, gamma-D (CRYGD)">
    <link uri="https://databases.lovd.nl/shared/genes/CRYGD"/>
    <text>Leiden Open Variation Database (LOVD)</text>
</comment>
<proteinExistence type="evidence at protein level"/>
<organism>
    <name type="scientific">Homo sapiens</name>
    <name type="common">Human</name>
    <dbReference type="NCBI Taxonomy" id="9606"/>
    <lineage>
        <taxon>Eukaryota</taxon>
        <taxon>Metazoa</taxon>
        <taxon>Chordata</taxon>
        <taxon>Craniata</taxon>
        <taxon>Vertebrata</taxon>
        <taxon>Euteleostomi</taxon>
        <taxon>Mammalia</taxon>
        <taxon>Eutheria</taxon>
        <taxon>Euarchontoglires</taxon>
        <taxon>Primates</taxon>
        <taxon>Haplorrhini</taxon>
        <taxon>Catarrhini</taxon>
        <taxon>Hominidae</taxon>
        <taxon>Homo</taxon>
    </lineage>
</organism>
<sequence>MGKITLYEDRGFQGRHYECSSDHPNLQPYLSRCNSARVDSGCWMLYEQPNYSGLQYFLRRGDYADHQQWMGLSDSVRSCRLIPHSGSHRIRLYEREDYRGQMIEFTEDCSCLQDRFRFNEIHSLNVLEGSWVLYELSNYRGRQYLLMPGDYRRYQDWGATNARVGSLRRVIDFS</sequence>
<accession>P07320</accession>
<accession>Q17RF7</accession>
<accession>Q53R51</accession>
<accession>Q99681</accession>
<dbReference type="EMBL" id="K03006">
    <property type="protein sequence ID" value="AAA52112.1"/>
    <property type="molecule type" value="Genomic_DNA"/>
</dbReference>
<dbReference type="EMBL" id="K03005">
    <property type="protein sequence ID" value="AAA52112.1"/>
    <property type="status" value="JOINED"/>
    <property type="molecule type" value="Genomic_DNA"/>
</dbReference>
<dbReference type="EMBL" id="U66583">
    <property type="protein sequence ID" value="AAB38686.1"/>
    <property type="molecule type" value="mRNA"/>
</dbReference>
<dbReference type="EMBL" id="AC093698">
    <property type="protein sequence ID" value="AAY24041.1"/>
    <property type="molecule type" value="Genomic_DNA"/>
</dbReference>
<dbReference type="EMBL" id="BC117338">
    <property type="protein sequence ID" value="AAI17339.1"/>
    <property type="molecule type" value="mRNA"/>
</dbReference>
<dbReference type="EMBL" id="BC117340">
    <property type="protein sequence ID" value="AAI17341.1"/>
    <property type="molecule type" value="mRNA"/>
</dbReference>
<dbReference type="CCDS" id="CCDS2378.1"/>
<dbReference type="PIR" id="I77413">
    <property type="entry name" value="I77413"/>
</dbReference>
<dbReference type="RefSeq" id="NP_008822.2">
    <property type="nucleotide sequence ID" value="NM_006891.3"/>
</dbReference>
<dbReference type="PDB" id="1H4A">
    <property type="method" value="X-ray"/>
    <property type="resolution" value="1.15 A"/>
    <property type="chains" value="X=2-174"/>
</dbReference>
<dbReference type="PDB" id="1HK0">
    <property type="method" value="X-ray"/>
    <property type="resolution" value="1.25 A"/>
    <property type="chains" value="X=2-174"/>
</dbReference>
<dbReference type="PDB" id="2G98">
    <property type="method" value="X-ray"/>
    <property type="resolution" value="2.20 A"/>
    <property type="chains" value="A/B=2-174"/>
</dbReference>
<dbReference type="PDB" id="2KFB">
    <property type="method" value="NMR"/>
    <property type="chains" value="A=2-174"/>
</dbReference>
<dbReference type="PDB" id="2KLJ">
    <property type="method" value="Other"/>
    <property type="chains" value="A=2-174"/>
</dbReference>
<dbReference type="PDB" id="4GR7">
    <property type="method" value="X-ray"/>
    <property type="resolution" value="1.70 A"/>
    <property type="chains" value="A/X=2-174"/>
</dbReference>
<dbReference type="PDB" id="4JGF">
    <property type="method" value="X-ray"/>
    <property type="resolution" value="2.50 A"/>
    <property type="chains" value="A/B=2-172"/>
</dbReference>
<dbReference type="PDB" id="6ETA">
    <property type="method" value="X-ray"/>
    <property type="resolution" value="2.20 A"/>
    <property type="chains" value="A/B=1-174"/>
</dbReference>
<dbReference type="PDB" id="6ETC">
    <property type="method" value="X-ray"/>
    <property type="resolution" value="1.20 A"/>
    <property type="chains" value="X=1-174"/>
</dbReference>
<dbReference type="PDB" id="6W5B">
    <property type="method" value="X-ray"/>
    <property type="resolution" value="1.15 A"/>
    <property type="chains" value="A=2-174"/>
</dbReference>
<dbReference type="PDB" id="6WCY">
    <property type="method" value="X-ray"/>
    <property type="resolution" value="1.20 A"/>
    <property type="chains" value="A/B=2-174"/>
</dbReference>
<dbReference type="PDB" id="7P53">
    <property type="method" value="X-ray"/>
    <property type="resolution" value="1.57 A"/>
    <property type="chains" value="X=2-174"/>
</dbReference>
<dbReference type="PDB" id="8BD0">
    <property type="method" value="X-ray"/>
    <property type="resolution" value="2.00 A"/>
    <property type="chains" value="A/X=2-172"/>
</dbReference>
<dbReference type="PDB" id="8BPI">
    <property type="method" value="X-ray"/>
    <property type="resolution" value="2.00 A"/>
    <property type="chains" value="AAA/XXX=2-174"/>
</dbReference>
<dbReference type="PDB" id="8Q3L">
    <property type="method" value="X-ray"/>
    <property type="resolution" value="2.10 A"/>
    <property type="chains" value="A/X=2-174"/>
</dbReference>
<dbReference type="PDBsum" id="1H4A"/>
<dbReference type="PDBsum" id="1HK0"/>
<dbReference type="PDBsum" id="2G98"/>
<dbReference type="PDBsum" id="2KFB"/>
<dbReference type="PDBsum" id="2KLJ"/>
<dbReference type="PDBsum" id="4GR7"/>
<dbReference type="PDBsum" id="4JGF"/>
<dbReference type="PDBsum" id="6ETA"/>
<dbReference type="PDBsum" id="6ETC"/>
<dbReference type="PDBsum" id="6W5B"/>
<dbReference type="PDBsum" id="6WCY"/>
<dbReference type="PDBsum" id="7P53"/>
<dbReference type="PDBsum" id="8BD0"/>
<dbReference type="PDBsum" id="8BPI"/>
<dbReference type="PDBsum" id="8Q3L"/>
<dbReference type="BMRB" id="P07320"/>
<dbReference type="PCDDB" id="P07320"/>
<dbReference type="SMR" id="P07320"/>
<dbReference type="BioGRID" id="107811">
    <property type="interactions" value="17"/>
</dbReference>
<dbReference type="DIP" id="DIP-46208N"/>
<dbReference type="FunCoup" id="P07320">
    <property type="interactions" value="173"/>
</dbReference>
<dbReference type="IntAct" id="P07320">
    <property type="interactions" value="14"/>
</dbReference>
<dbReference type="MINT" id="P07320"/>
<dbReference type="STRING" id="9606.ENSP00000264376"/>
<dbReference type="ChEMBL" id="CHEMBL4296286"/>
<dbReference type="iPTMnet" id="P07320"/>
<dbReference type="PhosphoSitePlus" id="P07320"/>
<dbReference type="BioMuta" id="CRYGD"/>
<dbReference type="DMDM" id="2506321"/>
<dbReference type="jPOST" id="P07320"/>
<dbReference type="MassIVE" id="P07320"/>
<dbReference type="PaxDb" id="9606-ENSP00000264376"/>
<dbReference type="PeptideAtlas" id="P07320"/>
<dbReference type="ProteomicsDB" id="51987"/>
<dbReference type="Pumba" id="P07320"/>
<dbReference type="Antibodypedia" id="34193">
    <property type="antibodies" value="221 antibodies from 23 providers"/>
</dbReference>
<dbReference type="DNASU" id="1421"/>
<dbReference type="Ensembl" id="ENST00000264376.5">
    <property type="protein sequence ID" value="ENSP00000264376.4"/>
    <property type="gene ID" value="ENSG00000118231.5"/>
</dbReference>
<dbReference type="Ensembl" id="ENST00000644920.2">
    <property type="protein sequence ID" value="ENSP00000496652.1"/>
    <property type="gene ID" value="ENSG00000285434.2"/>
</dbReference>
<dbReference type="GeneID" id="1421"/>
<dbReference type="KEGG" id="hsa:1421"/>
<dbReference type="MANE-Select" id="ENST00000264376.5">
    <property type="protein sequence ID" value="ENSP00000264376.4"/>
    <property type="RefSeq nucleotide sequence ID" value="NM_006891.4"/>
    <property type="RefSeq protein sequence ID" value="NP_008822.2"/>
</dbReference>
<dbReference type="UCSC" id="uc002vcn.5">
    <property type="organism name" value="human"/>
</dbReference>
<dbReference type="AGR" id="HGNC:2411"/>
<dbReference type="CTD" id="1421"/>
<dbReference type="DisGeNET" id="1421"/>
<dbReference type="GeneCards" id="CRYGD"/>
<dbReference type="HGNC" id="HGNC:2411">
    <property type="gene designation" value="CRYGD"/>
</dbReference>
<dbReference type="HPA" id="ENSG00000118231">
    <property type="expression patterns" value="Tissue enhanced (brain, ovary)"/>
</dbReference>
<dbReference type="MalaCards" id="CRYGD"/>
<dbReference type="MIM" id="115700">
    <property type="type" value="phenotype"/>
</dbReference>
<dbReference type="MIM" id="123690">
    <property type="type" value="gene"/>
</dbReference>
<dbReference type="neXtProt" id="NX_P07320"/>
<dbReference type="OpenTargets" id="ENSG00000118231"/>
<dbReference type="Orphanet" id="1377">
    <property type="disease" value="Cataract-microcornea syndrome"/>
</dbReference>
<dbReference type="Orphanet" id="98989">
    <property type="disease" value="Cerulean cataract"/>
</dbReference>
<dbReference type="Orphanet" id="98990">
    <property type="disease" value="Coralliform cataract"/>
</dbReference>
<dbReference type="Orphanet" id="441452">
    <property type="disease" value="Early-onset lamellar cataract"/>
</dbReference>
<dbReference type="Orphanet" id="98991">
    <property type="disease" value="Early-onset nuclear cataract"/>
</dbReference>
<dbReference type="Orphanet" id="98984">
    <property type="disease" value="Pulverulent cataract"/>
</dbReference>
<dbReference type="PharmGKB" id="PA26918"/>
<dbReference type="VEuPathDB" id="HostDB:ENSG00000118231"/>
<dbReference type="eggNOG" id="ENOG502RXJY">
    <property type="taxonomic scope" value="Eukaryota"/>
</dbReference>
<dbReference type="GeneTree" id="ENSGT00940000158720"/>
<dbReference type="HOGENOM" id="CLU_081883_1_1_1"/>
<dbReference type="InParanoid" id="P07320"/>
<dbReference type="OMA" id="NALEGSW"/>
<dbReference type="OrthoDB" id="8407241at2759"/>
<dbReference type="PAN-GO" id="P07320">
    <property type="GO annotations" value="3 GO annotations based on evolutionary models"/>
</dbReference>
<dbReference type="PhylomeDB" id="P07320"/>
<dbReference type="PathwayCommons" id="P07320"/>
<dbReference type="SignaLink" id="P07320"/>
<dbReference type="SIGNOR" id="P07320"/>
<dbReference type="BioGRID-ORCS" id="1421">
    <property type="hits" value="20 hits in 1148 CRISPR screens"/>
</dbReference>
<dbReference type="CD-CODE" id="E5DE0AD2">
    <property type="entry name" value="Synthetic Condensate 000251"/>
</dbReference>
<dbReference type="EvolutionaryTrace" id="P07320"/>
<dbReference type="GeneWiki" id="Crystallin,_gamma_D"/>
<dbReference type="GenomeRNAi" id="1421"/>
<dbReference type="Pharos" id="P07320">
    <property type="development level" value="Tbio"/>
</dbReference>
<dbReference type="PRO" id="PR:P07320"/>
<dbReference type="Proteomes" id="UP000005640">
    <property type="component" value="Chromosome 2"/>
</dbReference>
<dbReference type="RNAct" id="P07320">
    <property type="molecule type" value="protein"/>
</dbReference>
<dbReference type="Bgee" id="ENSG00000118231">
    <property type="expression patterns" value="Expressed in male germ line stem cell (sensu Vertebrata) in testis and 44 other cell types or tissues"/>
</dbReference>
<dbReference type="ExpressionAtlas" id="P07320">
    <property type="expression patterns" value="baseline and differential"/>
</dbReference>
<dbReference type="GO" id="GO:0005737">
    <property type="term" value="C:cytoplasm"/>
    <property type="evidence" value="ECO:0000250"/>
    <property type="project" value="UniProtKB"/>
</dbReference>
<dbReference type="GO" id="GO:0005634">
    <property type="term" value="C:nucleus"/>
    <property type="evidence" value="ECO:0000250"/>
    <property type="project" value="UniProtKB"/>
</dbReference>
<dbReference type="GO" id="GO:0005212">
    <property type="term" value="F:structural constituent of eye lens"/>
    <property type="evidence" value="ECO:0000318"/>
    <property type="project" value="GO_Central"/>
</dbReference>
<dbReference type="GO" id="GO:0034614">
    <property type="term" value="P:cellular response to reactive oxygen species"/>
    <property type="evidence" value="ECO:0000314"/>
    <property type="project" value="UniProtKB"/>
</dbReference>
<dbReference type="GO" id="GO:0002088">
    <property type="term" value="P:lens development in camera-type eye"/>
    <property type="evidence" value="ECO:0000250"/>
    <property type="project" value="UniProtKB"/>
</dbReference>
<dbReference type="GO" id="GO:0070306">
    <property type="term" value="P:lens fiber cell differentiation"/>
    <property type="evidence" value="ECO:0000250"/>
    <property type="project" value="UniProtKB"/>
</dbReference>
<dbReference type="GO" id="GO:0007601">
    <property type="term" value="P:visual perception"/>
    <property type="evidence" value="ECO:0000315"/>
    <property type="project" value="UniProtKB"/>
</dbReference>
<dbReference type="FunFam" id="2.60.20.10:FF:000001">
    <property type="entry name" value="Crystallin gamma S"/>
    <property type="match status" value="1"/>
</dbReference>
<dbReference type="FunFam" id="2.60.20.10:FF:000003">
    <property type="entry name" value="Crystallin gamma S"/>
    <property type="match status" value="1"/>
</dbReference>
<dbReference type="Gene3D" id="2.60.20.10">
    <property type="entry name" value="Crystallins"/>
    <property type="match status" value="2"/>
</dbReference>
<dbReference type="InterPro" id="IPR050252">
    <property type="entry name" value="Beta/Gamma-Crystallin"/>
</dbReference>
<dbReference type="InterPro" id="IPR001064">
    <property type="entry name" value="Beta/gamma_crystallin"/>
</dbReference>
<dbReference type="InterPro" id="IPR011024">
    <property type="entry name" value="G_crystallin-like"/>
</dbReference>
<dbReference type="PANTHER" id="PTHR11818">
    <property type="entry name" value="BETA/GAMMA CRYSTALLIN"/>
    <property type="match status" value="1"/>
</dbReference>
<dbReference type="PANTHER" id="PTHR11818:SF119">
    <property type="entry name" value="GAMMA-CRYSTALLIN D"/>
    <property type="match status" value="1"/>
</dbReference>
<dbReference type="Pfam" id="PF00030">
    <property type="entry name" value="Crystall"/>
    <property type="match status" value="2"/>
</dbReference>
<dbReference type="PRINTS" id="PR01367">
    <property type="entry name" value="BGCRYSTALLIN"/>
</dbReference>
<dbReference type="SMART" id="SM00247">
    <property type="entry name" value="XTALbg"/>
    <property type="match status" value="2"/>
</dbReference>
<dbReference type="SUPFAM" id="SSF49695">
    <property type="entry name" value="gamma-Crystallin-like"/>
    <property type="match status" value="1"/>
</dbReference>
<dbReference type="PROSITE" id="PS50915">
    <property type="entry name" value="CRYSTALLIN_BETA_GAMMA"/>
    <property type="match status" value="4"/>
</dbReference>
<name>CRGD_HUMAN</name>
<evidence type="ECO:0000255" key="1">
    <source>
        <dbReference type="PROSITE-ProRule" id="PRU00028"/>
    </source>
</evidence>
<evidence type="ECO:0000269" key="2">
    <source>
    </source>
</evidence>
<evidence type="ECO:0000269" key="3">
    <source>
    </source>
</evidence>
<evidence type="ECO:0000269" key="4">
    <source>
    </source>
</evidence>
<evidence type="ECO:0000269" key="5">
    <source>
    </source>
</evidence>
<evidence type="ECO:0000269" key="6">
    <source>
    </source>
</evidence>
<evidence type="ECO:0000269" key="7">
    <source>
    </source>
</evidence>
<evidence type="ECO:0000269" key="8">
    <source>
    </source>
</evidence>
<evidence type="ECO:0000269" key="9">
    <source>
    </source>
</evidence>
<evidence type="ECO:0000269" key="10">
    <source>
    </source>
</evidence>
<evidence type="ECO:0000269" key="11">
    <source>
    </source>
</evidence>
<evidence type="ECO:0000269" key="12">
    <source>
    </source>
</evidence>
<evidence type="ECO:0000269" key="13">
    <source>
    </source>
</evidence>
<evidence type="ECO:0000269" key="14">
    <source>
    </source>
</evidence>
<evidence type="ECO:0000269" key="15">
    <source>
    </source>
</evidence>
<evidence type="ECO:0000269" key="16">
    <source>
    </source>
</evidence>
<evidence type="ECO:0000269" key="17">
    <source>
    </source>
</evidence>
<evidence type="ECO:0000269" key="18">
    <source>
    </source>
</evidence>
<evidence type="ECO:0000269" key="19">
    <source>
    </source>
</evidence>
<evidence type="ECO:0000269" key="20">
    <source>
    </source>
</evidence>
<evidence type="ECO:0000269" key="21">
    <source>
    </source>
</evidence>
<evidence type="ECO:0000303" key="22">
    <source>
    </source>
</evidence>
<evidence type="ECO:0000305" key="23"/>
<evidence type="ECO:0007829" key="24">
    <source>
        <dbReference type="PDB" id="1H4A"/>
    </source>
</evidence>
<evidence type="ECO:0007829" key="25">
    <source>
        <dbReference type="PDB" id="6WCY"/>
    </source>
</evidence>
<feature type="initiator methionine" description="Removed" evidence="20">
    <location>
        <position position="1"/>
    </location>
</feature>
<feature type="chain" id="PRO_0000057588" description="Gamma-crystallin D">
    <location>
        <begin position="2"/>
        <end position="174"/>
    </location>
</feature>
<feature type="domain" description="Beta/gamma crystallin 'Greek key' 1" evidence="1">
    <location>
        <begin position="2"/>
        <end position="40"/>
    </location>
</feature>
<feature type="domain" description="Beta/gamma crystallin 'Greek key' 2" evidence="1">
    <location>
        <begin position="41"/>
        <end position="83"/>
    </location>
</feature>
<feature type="domain" description="Beta/gamma crystallin 'Greek key' 3" evidence="1">
    <location>
        <begin position="88"/>
        <end position="128"/>
    </location>
</feature>
<feature type="domain" description="Beta/gamma crystallin 'Greek key' 4" evidence="1">
    <location>
        <begin position="129"/>
        <end position="171"/>
    </location>
</feature>
<feature type="region of interest" description="Connecting peptide">
    <location>
        <begin position="84"/>
        <end position="87"/>
    </location>
</feature>
<feature type="sequence variant" id="VAR_010733" description="In CTRCT4; progressive punctate cataract with early onset; causes disulfide-linked oligomers formation with consequent protein aggregation and precipitation; dbSNP:rs121909595." evidence="3 21">
    <original>R</original>
    <variation>C</variation>
    <location>
        <position position="15"/>
    </location>
</feature>
<feature type="sequence variant" id="VAR_034955" description="In CTRCT4; reduces solubility; dbSNP:rs28931605." evidence="9 11">
    <original>P</original>
    <variation>S</variation>
    <location>
        <position position="24"/>
    </location>
</feature>
<feature type="sequence variant" id="VAR_021145" description="In CTRCT4; uncertain significance; reduces solubility; dbSNP:rs28931605." evidence="6 7 9 16 17">
    <original>P</original>
    <variation>T</variation>
    <location>
        <position position="24"/>
    </location>
</feature>
<feature type="sequence variant" id="VAR_084800" description="In CTRCT4; uncertain significance." evidence="15">
    <original>A</original>
    <variation>P</variation>
    <location>
        <position position="36"/>
    </location>
</feature>
<feature type="sequence variant" id="VAR_010734" description="In CTRCT4; very low solubility; crystallizes spontaneously; dbSNP:rs121909597." evidence="4 5">
    <original>R</original>
    <variation>S</variation>
    <location>
        <position position="37"/>
    </location>
</feature>
<feature type="sequence variant" id="VAR_064829" description="In CTRCT4; much less stable than the wild-type protein; more prone to aggregate when subjected to environmental stresses such as heat and UV irradiation." evidence="14">
    <original>W</original>
    <variation>R</variation>
    <location>
        <position position="43"/>
    </location>
</feature>
<feature type="sequence variant" id="VAR_084801" description="In CTRCT4; uncertain significance; dbSNP:rs28931605." evidence="16">
    <original>L</original>
    <variation>P</variation>
    <location>
        <position position="45"/>
    </location>
</feature>
<feature type="sequence variant" id="VAR_084802" description="In CTRCT4; uncertain significance; dbSNP:rs202233735." evidence="13">
    <location>
        <begin position="56"/>
        <end position="174"/>
    </location>
</feature>
<feature type="sequence variant" id="VAR_010735" description="In CTRCT4; lowered solubility; crystallizes easily; dbSNP:rs121909596." evidence="2 5 8">
    <original>R</original>
    <variation>H</variation>
    <location>
        <position position="59"/>
    </location>
</feature>
<feature type="sequence variant" id="VAR_021146" evidence="6 19">
    <original>M</original>
    <variation>V</variation>
    <location>
        <position position="102"/>
    </location>
</feature>
<feature type="sequence variant" id="VAR_034956" description="In CTRCT4." evidence="10">
    <original>E</original>
    <variation>A</variation>
    <location>
        <position position="107"/>
    </location>
</feature>
<feature type="sequence variant" id="VAR_084803" description="In CTRCT4; uncertain significance." evidence="18">
    <location>
        <begin position="131"/>
        <end position="174"/>
    </location>
</feature>
<feature type="sequence variant" id="VAR_084804" description="In CTRCT4." evidence="12 16 18">
    <location>
        <begin position="140"/>
        <end position="174"/>
    </location>
</feature>
<feature type="sequence variant" id="VAR_084805" description="In CTRCT4; dbSNP:rs121909598." evidence="6 18">
    <location>
        <begin position="157"/>
        <end position="174"/>
    </location>
</feature>
<feature type="mutagenesis site" description="No effect on solubility.">
    <original>PN</original>
    <variation>TK</variation>
    <location>
        <begin position="24"/>
        <end position="25"/>
    </location>
</feature>
<feature type="mutagenesis site" description="No effect on solubility." evidence="9">
    <original>P</original>
    <variation>TP</variation>
    <location>
        <position position="24"/>
    </location>
</feature>
<feature type="mutagenesis site" description="Slightly reduces solubility." evidence="9">
    <original>P</original>
    <variation>V</variation>
    <location>
        <position position="24"/>
    </location>
</feature>
<feature type="strand" evidence="24">
    <location>
        <begin position="3"/>
        <end position="9"/>
    </location>
</feature>
<feature type="helix" evidence="24">
    <location>
        <begin position="10"/>
        <end position="12"/>
    </location>
</feature>
<feature type="strand" evidence="24">
    <location>
        <begin position="13"/>
        <end position="21"/>
    </location>
</feature>
<feature type="turn" evidence="24">
    <location>
        <begin position="27"/>
        <end position="29"/>
    </location>
</feature>
<feature type="strand" evidence="24">
    <location>
        <begin position="34"/>
        <end position="48"/>
    </location>
</feature>
<feature type="turn" evidence="24">
    <location>
        <begin position="49"/>
        <end position="51"/>
    </location>
</feature>
<feature type="strand" evidence="24">
    <location>
        <begin position="52"/>
        <end position="58"/>
    </location>
</feature>
<feature type="strand" evidence="24">
    <location>
        <begin position="60"/>
        <end position="65"/>
    </location>
</feature>
<feature type="helix" evidence="24">
    <location>
        <begin position="66"/>
        <end position="69"/>
    </location>
</feature>
<feature type="strand" evidence="24">
    <location>
        <begin position="72"/>
        <end position="74"/>
    </location>
</feature>
<feature type="strand" evidence="24">
    <location>
        <begin position="78"/>
        <end position="82"/>
    </location>
</feature>
<feature type="strand" evidence="24">
    <location>
        <begin position="89"/>
        <end position="95"/>
    </location>
</feature>
<feature type="helix" evidence="24">
    <location>
        <begin position="96"/>
        <end position="98"/>
    </location>
</feature>
<feature type="strand" evidence="24">
    <location>
        <begin position="99"/>
        <end position="107"/>
    </location>
</feature>
<feature type="helix" evidence="24">
    <location>
        <begin position="112"/>
        <end position="114"/>
    </location>
</feature>
<feature type="strand" evidence="25">
    <location>
        <begin position="118"/>
        <end position="120"/>
    </location>
</feature>
<feature type="strand" evidence="24">
    <location>
        <begin position="123"/>
        <end position="129"/>
    </location>
</feature>
<feature type="strand" evidence="24">
    <location>
        <begin position="131"/>
        <end position="136"/>
    </location>
</feature>
<feature type="turn" evidence="24">
    <location>
        <begin position="137"/>
        <end position="139"/>
    </location>
</feature>
<feature type="strand" evidence="24">
    <location>
        <begin position="140"/>
        <end position="146"/>
    </location>
</feature>
<feature type="strand" evidence="24">
    <location>
        <begin position="148"/>
        <end position="151"/>
    </location>
</feature>
<feature type="helix" evidence="24">
    <location>
        <begin position="154"/>
        <end position="157"/>
    </location>
</feature>
<feature type="strand" evidence="24">
    <location>
        <begin position="166"/>
        <end position="169"/>
    </location>
</feature>
<reference key="1">
    <citation type="journal article" date="1985" name="Mol. Cell. Biol.">
        <title>Structural and evolutionary relationships among five members of the human gamma-crystallin gene family.</title>
        <authorList>
            <person name="Meakin S.O."/>
            <person name="Breitman M.L."/>
            <person name="Tsui L.-C."/>
        </authorList>
    </citation>
    <scope>NUCLEOTIDE SEQUENCE [GENOMIC DNA]</scope>
    <scope>VARIANT VAL-102</scope>
</reference>
<reference key="2">
    <citation type="journal article" date="1996" name="J. Biol. Chem.">
        <title>Cloning, expression, and chaperone-like activity of human alphaA-crystallin.</title>
        <authorList>
            <person name="Andley U.P."/>
            <person name="Mathur S."/>
            <person name="Griest T.A."/>
            <person name="Petrash J.M."/>
        </authorList>
    </citation>
    <scope>NUCLEOTIDE SEQUENCE [MRNA]</scope>
    <source>
        <tissue>Lens</tissue>
    </source>
</reference>
<reference key="3">
    <citation type="journal article" date="2005" name="Nature">
        <title>Generation and annotation of the DNA sequences of human chromosomes 2 and 4.</title>
        <authorList>
            <person name="Hillier L.W."/>
            <person name="Graves T.A."/>
            <person name="Fulton R.S."/>
            <person name="Fulton L.A."/>
            <person name="Pepin K.H."/>
            <person name="Minx P."/>
            <person name="Wagner-McPherson C."/>
            <person name="Layman D."/>
            <person name="Wylie K."/>
            <person name="Sekhon M."/>
            <person name="Becker M.C."/>
            <person name="Fewell G.A."/>
            <person name="Delehaunty K.D."/>
            <person name="Miner T.L."/>
            <person name="Nash W.E."/>
            <person name="Kremitzki C."/>
            <person name="Oddy L."/>
            <person name="Du H."/>
            <person name="Sun H."/>
            <person name="Bradshaw-Cordum H."/>
            <person name="Ali J."/>
            <person name="Carter J."/>
            <person name="Cordes M."/>
            <person name="Harris A."/>
            <person name="Isak A."/>
            <person name="van Brunt A."/>
            <person name="Nguyen C."/>
            <person name="Du F."/>
            <person name="Courtney L."/>
            <person name="Kalicki J."/>
            <person name="Ozersky P."/>
            <person name="Abbott S."/>
            <person name="Armstrong J."/>
            <person name="Belter E.A."/>
            <person name="Caruso L."/>
            <person name="Cedroni M."/>
            <person name="Cotton M."/>
            <person name="Davidson T."/>
            <person name="Desai A."/>
            <person name="Elliott G."/>
            <person name="Erb T."/>
            <person name="Fronick C."/>
            <person name="Gaige T."/>
            <person name="Haakenson W."/>
            <person name="Haglund K."/>
            <person name="Holmes A."/>
            <person name="Harkins R."/>
            <person name="Kim K."/>
            <person name="Kruchowski S.S."/>
            <person name="Strong C.M."/>
            <person name="Grewal N."/>
            <person name="Goyea E."/>
            <person name="Hou S."/>
            <person name="Levy A."/>
            <person name="Martinka S."/>
            <person name="Mead K."/>
            <person name="McLellan M.D."/>
            <person name="Meyer R."/>
            <person name="Randall-Maher J."/>
            <person name="Tomlinson C."/>
            <person name="Dauphin-Kohlberg S."/>
            <person name="Kozlowicz-Reilly A."/>
            <person name="Shah N."/>
            <person name="Swearengen-Shahid S."/>
            <person name="Snider J."/>
            <person name="Strong J.T."/>
            <person name="Thompson J."/>
            <person name="Yoakum M."/>
            <person name="Leonard S."/>
            <person name="Pearman C."/>
            <person name="Trani L."/>
            <person name="Radionenko M."/>
            <person name="Waligorski J.E."/>
            <person name="Wang C."/>
            <person name="Rock S.M."/>
            <person name="Tin-Wollam A.-M."/>
            <person name="Maupin R."/>
            <person name="Latreille P."/>
            <person name="Wendl M.C."/>
            <person name="Yang S.-P."/>
            <person name="Pohl C."/>
            <person name="Wallis J.W."/>
            <person name="Spieth J."/>
            <person name="Bieri T.A."/>
            <person name="Berkowicz N."/>
            <person name="Nelson J.O."/>
            <person name="Osborne J."/>
            <person name="Ding L."/>
            <person name="Meyer R."/>
            <person name="Sabo A."/>
            <person name="Shotland Y."/>
            <person name="Sinha P."/>
            <person name="Wohldmann P.E."/>
            <person name="Cook L.L."/>
            <person name="Hickenbotham M.T."/>
            <person name="Eldred J."/>
            <person name="Williams D."/>
            <person name="Jones T.A."/>
            <person name="She X."/>
            <person name="Ciccarelli F.D."/>
            <person name="Izaurralde E."/>
            <person name="Taylor J."/>
            <person name="Schmutz J."/>
            <person name="Myers R.M."/>
            <person name="Cox D.R."/>
            <person name="Huang X."/>
            <person name="McPherson J.D."/>
            <person name="Mardis E.R."/>
            <person name="Clifton S.W."/>
            <person name="Warren W.C."/>
            <person name="Chinwalla A.T."/>
            <person name="Eddy S.R."/>
            <person name="Marra M.A."/>
            <person name="Ovcharenko I."/>
            <person name="Furey T.S."/>
            <person name="Miller W."/>
            <person name="Eichler E.E."/>
            <person name="Bork P."/>
            <person name="Suyama M."/>
            <person name="Torrents D."/>
            <person name="Waterston R.H."/>
            <person name="Wilson R.K."/>
        </authorList>
    </citation>
    <scope>NUCLEOTIDE SEQUENCE [LARGE SCALE GENOMIC DNA]</scope>
</reference>
<reference key="4">
    <citation type="journal article" date="2004" name="Genome Res.">
        <title>The status, quality, and expansion of the NIH full-length cDNA project: the Mammalian Gene Collection (MGC).</title>
        <authorList>
            <consortium name="The MGC Project Team"/>
        </authorList>
    </citation>
    <scope>NUCLEOTIDE SEQUENCE [LARGE SCALE MRNA]</scope>
    <source>
        <tissue>Testis</tissue>
    </source>
</reference>
<reference key="5">
    <citation type="journal article" date="1997" name="J. Biol. Chem.">
        <title>Sequence analysis of betaA3, betaB3, and betaA4 crystallins completes the identification of the major proteins in young human lens.</title>
        <authorList>
            <person name="Lampi K.J."/>
            <person name="Ma Z."/>
            <person name="Shih M."/>
            <person name="Shearer T.R."/>
            <person name="Smith J.B."/>
            <person name="Smith D.L."/>
            <person name="David L.L."/>
        </authorList>
    </citation>
    <scope>PROTEIN SEQUENCE OF 2-11</scope>
</reference>
<reference key="6">
    <citation type="journal article" date="2005" name="Biochemistry">
        <title>Decrease in protein solubility and cataract formation caused by the Pro23 to Thr mutation in human gamma D-crystallin.</title>
        <authorList>
            <person name="Pande A."/>
            <person name="Annunziata O."/>
            <person name="Asherie N."/>
            <person name="Ogun O."/>
            <person name="Benedek G.B."/>
            <person name="Pande J."/>
        </authorList>
    </citation>
    <scope>MUTAGENESIS OF PRO-24</scope>
    <scope>CHARACTERIZATION OF VARIANTS CTRCT4 THR-24 AND SER-24</scope>
</reference>
<reference key="7">
    <citation type="journal article" date="2011" name="BMC Syst. Biol.">
        <title>Initial characterization of the human central proteome.</title>
        <authorList>
            <person name="Burkard T.R."/>
            <person name="Planyavsky M."/>
            <person name="Kaupe I."/>
            <person name="Breitwieser F.P."/>
            <person name="Buerckstuemmer T."/>
            <person name="Bennett K.L."/>
            <person name="Superti-Furga G."/>
            <person name="Colinge J."/>
        </authorList>
    </citation>
    <scope>IDENTIFICATION BY MASS SPECTROMETRY [LARGE SCALE ANALYSIS]</scope>
</reference>
<reference key="8">
    <citation type="journal article" date="2003" name="J. Mol. Biol.">
        <title>High-resolution X-ray crystal structures of human gammaD crystallin (1.25 A) and the R58H mutant (1.15 A) associated with aculeiform cataract.</title>
        <authorList>
            <person name="Basak A."/>
            <person name="Bateman O."/>
            <person name="Slingsby C."/>
            <person name="Pande A."/>
            <person name="Asherie N."/>
            <person name="Ogun O."/>
            <person name="Benedek G.B."/>
            <person name="Pande J."/>
        </authorList>
    </citation>
    <scope>X-RAY CRYSTALLOGRAPHY (1.25 ANGSTROMS)</scope>
    <scope>X-RAY CRYSTALLOGRAPHY (1.15 ANGSTROMS) OF VARIANT HIS-59</scope>
</reference>
<reference key="9">
    <citation type="journal article" date="2003" name="Biochem. Biophys. Res. Commun.">
        <title>Homology models of human gamma-crystallins: structural study of the extensive charge network in gamma-crystallins.</title>
        <authorList>
            <person name="Salim A."/>
            <person name="Zaidi Z.H."/>
        </authorList>
    </citation>
    <scope>3D-STRUCTURE MODELING</scope>
</reference>
<reference key="10">
    <citation type="journal article" date="1999" name="Am. J. Hum. Genet.">
        <title>The gamma-crystallins and human cataracts: a puzzle made clearer.</title>
        <authorList>
            <person name="Heon E."/>
            <person name="Priston M."/>
            <person name="Schorderet D.F."/>
            <person name="Billingsley G.D."/>
            <person name="Girard P.O."/>
            <person name="Lubsen N."/>
            <person name="Munier F.L."/>
        </authorList>
    </citation>
    <scope>VARIANT CTRCT4 HIS-59</scope>
</reference>
<reference key="11">
    <citation type="journal article" date="1999" name="Proc. Natl. Acad. Sci. U.S.A.">
        <title>Progressive juvenile-onset punctate cataracts caused by mutation of the gamma-D-crystallin gene.</title>
        <authorList>
            <person name="Stephan D.A."/>
            <person name="Gillanders E."/>
            <person name="Vanderveen D."/>
            <person name="Freas-Lutz D."/>
            <person name="Wistow G."/>
            <person name="Baxevanis A.D."/>
            <person name="Robbins C.M."/>
            <person name="VanAuken A."/>
            <person name="Quesenberry M.I."/>
            <person name="Bailey-Wilson J."/>
            <person name="Juo S.-H.H."/>
            <person name="Trent J.M."/>
            <person name="Smith L."/>
            <person name="Brownstein M.J."/>
        </authorList>
    </citation>
    <scope>VARIANT CTRCT4 CYS-15</scope>
</reference>
<reference key="12">
    <citation type="journal article" date="2000" name="Hum. Mol. Genet.">
        <title>Link between a novel human gamma-D-crystallin allele and a unique cataract phenotype explained by protein crystallography.</title>
        <authorList>
            <person name="Kmoch S."/>
            <person name="Brynda J."/>
            <person name="Asfaw B."/>
            <person name="Bezouska K."/>
            <person name="Novak P."/>
            <person name="Rezacova P."/>
            <person name="Ondrova L."/>
            <person name="Filipec M."/>
            <person name="Sedlacek J."/>
            <person name="Elleder M."/>
        </authorList>
    </citation>
    <scope>VARIANT CTRCT4 SER-37</scope>
</reference>
<reference key="13">
    <citation type="journal article" date="2000" name="Proc. Natl. Acad. Sci. U.S.A.">
        <title>Molecular basis of a progressive juvenile-onset hereditary cataract.</title>
        <authorList>
            <person name="Pande A."/>
            <person name="Pande J."/>
            <person name="Asherie N."/>
            <person name="Lomakin A."/>
            <person name="Ogun O."/>
            <person name="King J.A."/>
            <person name="Lubsen N.H."/>
            <person name="Walton D."/>
            <person name="Benedek G.B."/>
        </authorList>
    </citation>
    <scope>SUBUNIT</scope>
    <scope>CHARACTERIZATION OF VARIANT CTRCT4 CYS-15</scope>
</reference>
<reference key="14">
    <citation type="journal article" date="2001" name="Proc. Natl. Acad. Sci. U.S.A.">
        <title>Crystal cataracts: human genetic cataract caused by protein crystallization.</title>
        <authorList>
            <person name="Pande A."/>
            <person name="Pande J."/>
            <person name="Asherie N."/>
            <person name="Lomakin A."/>
            <person name="Ogun O."/>
            <person name="King J."/>
            <person name="Benedek G.B."/>
        </authorList>
    </citation>
    <scope>CHARACTERIZATION OF VARIANTS CTRCT4 SER-37 AND HIS-59</scope>
</reference>
<reference key="15">
    <citation type="journal article" date="2002" name="J. Med. Genet.">
        <title>Novel mutations in the gamma-crystallin genes cause autosomal dominant congenital cataracts.</title>
        <authorList>
            <person name="Santhiya S.T."/>
            <person name="Shyam Manohar M."/>
            <person name="Rawlley D."/>
            <person name="Vijayalakshmi P."/>
            <person name="Namperumalsamy P."/>
            <person name="Gopinath P.M."/>
            <person name="Loester J."/>
            <person name="Graw J."/>
        </authorList>
    </citation>
    <scope>VARIANTS CTRCT4 THR-24 AND 157-TRP--SER-174 DEL</scope>
    <scope>VARIANT VAL-102</scope>
</reference>
<reference key="16">
    <citation type="journal article" date="2003" name="J. Med. Genet.">
        <title>Gamma-D crystallin gene (CRYGD) mutation causes autosomal dominant congenital cerulean cataracts.</title>
        <authorList>
            <person name="Nandrot E."/>
            <person name="Slingsby C."/>
            <person name="Basak A."/>
            <person name="Cherif-Chefchaouni M."/>
            <person name="Benazzouz B."/>
            <person name="Hajaji Y."/>
            <person name="Boutayeb S."/>
            <person name="Gribouval O."/>
            <person name="Arbogast L."/>
            <person name="Berraho A."/>
            <person name="Abitbol M."/>
            <person name="Hilal L."/>
        </authorList>
    </citation>
    <scope>VARIANT CTRCT4 THR-24</scope>
</reference>
<reference key="17">
    <citation type="journal article" date="2006" name="Mol. Vis.">
        <title>Two affected siblings with nuclear cataract associated with a novel missense mutation in the CRYGD gene.</title>
        <authorList>
            <person name="Messina-Baas O.M."/>
            <person name="Gonzalez-Huerta L.M."/>
            <person name="Cuevas-Covarrubias S.A."/>
        </authorList>
    </citation>
    <scope>VARIANT CTRCT4 ALA-107</scope>
</reference>
<reference key="18">
    <citation type="journal article" date="2007" name="Am. J. Hum. Genet.">
        <title>Conversion and compensatory evolution of the gamma-crystallin genes and identification of a cataractogenic mutation that reverses the sequence of the human CRYGD gene to an ancestral state.</title>
        <authorList>
            <person name="Plotnikova O.V."/>
            <person name="Kondrashov F.A."/>
            <person name="Vlasov P.K."/>
            <person name="Grigorenko A.P."/>
            <person name="Ginter E.K."/>
            <person name="Rogaev E.I."/>
        </authorList>
    </citation>
    <scope>VARIANT CTRCT4 SER-24</scope>
</reference>
<reference key="19">
    <citation type="journal article" date="2008" name="Mol. Vis.">
        <title>Crystallin gene mutations in Indian families with inherited pediatric cataract.</title>
        <authorList>
            <person name="Devi R.R."/>
            <person name="Yao W."/>
            <person name="Vijayalakshmi P."/>
            <person name="Sergeev Y.V."/>
            <person name="Sundaresan P."/>
            <person name="Hejtmancik J.F."/>
        </authorList>
    </citation>
    <scope>VARIANT CTRCT4 140-ARG--SER-174 DEL</scope>
</reference>
<reference key="20">
    <citation type="journal article" date="2009" name="Mol. Vis.">
        <title>Mutation analysis of CRYAA, CRYGC, and CRYGD associated with autosomal dominant congenital cataract in Brazilian families.</title>
        <authorList>
            <person name="Santana A."/>
            <person name="Waiswol M."/>
            <person name="Arcieri E.S."/>
            <person name="Cabral de Vasconcellos J.P."/>
            <person name="Barbosa de Melo M."/>
        </authorList>
    </citation>
    <scope>VARIANT CTRCT4 56-TYR--SER-174 DEL</scope>
</reference>
<reference key="21">
    <citation type="journal article" date="2011" name="Hum. Mutat.">
        <title>A novel CRYGD mutation (p.Trp43Arg) causing autosomal dominant congenital cataract in a Chinese family.</title>
        <authorList>
            <person name="Wang B."/>
            <person name="Yu C."/>
            <person name="Xi Y.B."/>
            <person name="Cai H.C."/>
            <person name="Wang J."/>
            <person name="Zhou S."/>
            <person name="Zhou S."/>
            <person name="Wu Y."/>
            <person name="Yan Y.B."/>
            <person name="Ma X."/>
            <person name="Xie L."/>
        </authorList>
    </citation>
    <scope>VARIANT CTRCT4 ARG-43</scope>
    <scope>CHARACTERIZATION OF VARIANT CTRCT4 ARG-43</scope>
</reference>
<reference key="22">
    <citation type="journal article" date="2011" name="Mol. Vis.">
        <title>Mutation analysis of 12 genes in Chinese families with congenital cataracts.</title>
        <authorList>
            <person name="Sun W."/>
            <person name="Xiao X."/>
            <person name="Li S."/>
            <person name="Guo X."/>
            <person name="Zhang Q."/>
        </authorList>
    </citation>
    <scope>VARIANT CTRCT4 PRO-36</scope>
</reference>
<reference key="23">
    <citation type="journal article" date="2018" name="Orphanet J. Rare Dis.">
        <title>Clinical and genetic characteristics of Chinese patients with familial or sporadic pediatric cataract.</title>
        <authorList>
            <person name="Li J."/>
            <person name="Leng Y."/>
            <person name="Han S."/>
            <person name="Yan L."/>
            <person name="Lu C."/>
            <person name="Luo Y."/>
            <person name="Zhang X."/>
            <person name="Cao L."/>
        </authorList>
    </citation>
    <scope>VARIANTS CTRCT4 THR-24; PRO-45 AND 140-ARG--SER-174 DEL</scope>
</reference>
<reference key="24">
    <citation type="journal article" date="2019" name="Mol. Vis.">
        <title>Mutation screening of crystallin genes in Chinese families with congenital cataracts.</title>
        <authorList>
            <person name="Zhuang J."/>
            <person name="Cao Z."/>
            <person name="Zhu Y."/>
            <person name="Liu L."/>
            <person name="Tong Y."/>
            <person name="Chen X."/>
            <person name="Wang Y."/>
            <person name="Lu C."/>
            <person name="Ma X."/>
            <person name="Yang J."/>
        </authorList>
    </citation>
    <scope>VARIANT CTRCT4 THR-24</scope>
</reference>
<reference key="25">
    <citation type="journal article" date="2020" name="Orphanet J. Rare Dis.">
        <title>The genetic landscape of crystallins in congenital cataract.</title>
        <authorList>
            <person name="Berry V."/>
            <person name="Ionides A."/>
            <person name="Pontikos N."/>
            <person name="Georgiou M."/>
            <person name="Yu J."/>
            <person name="Ocaka L.A."/>
            <person name="Moore A.T."/>
            <person name="Quinlan R.A."/>
            <person name="Michaelides M."/>
        </authorList>
    </citation>
    <scope>VARIANTS CTRCT4 131-TRP--SER-174 DEL; 140-ARG--SER-174 DEL AND 157-TRP--SER-174 DEL</scope>
</reference>
<keyword id="KW-0002">3D-structure</keyword>
<keyword id="KW-0898">Cataract</keyword>
<keyword id="KW-0903">Direct protein sequencing</keyword>
<keyword id="KW-0225">Disease variant</keyword>
<keyword id="KW-0273">Eye lens protein</keyword>
<keyword id="KW-1267">Proteomics identification</keyword>
<keyword id="KW-1185">Reference proteome</keyword>
<keyword id="KW-0677">Repeat</keyword>
<keyword id="KW-0716">Sensory transduction</keyword>
<keyword id="KW-0844">Vision</keyword>
<gene>
    <name type="primary">CRYGD</name>
    <name type="synonym">CRYG4</name>
</gene>